<comment type="function">
    <text evidence="1">One of the primary rRNA binding proteins, this protein initially binds near the 5'-end of the 23S rRNA. It is important during the early stages of 50S assembly. It makes multiple contacts with different domains of the 23S rRNA in the assembled 50S subunit and ribosome.</text>
</comment>
<comment type="function">
    <text evidence="1">Forms part of the polypeptide exit tunnel.</text>
</comment>
<comment type="subunit">
    <text evidence="1">Part of the 50S ribosomal subunit.</text>
</comment>
<comment type="similarity">
    <text evidence="1">Belongs to the universal ribosomal protein uL4 family.</text>
</comment>
<reference key="1">
    <citation type="submission" date="2006-12" db="EMBL/GenBank/DDBJ databases">
        <title>Complete sequence of Chlorobium phaeobacteroides DSM 266.</title>
        <authorList>
            <consortium name="US DOE Joint Genome Institute"/>
            <person name="Copeland A."/>
            <person name="Lucas S."/>
            <person name="Lapidus A."/>
            <person name="Barry K."/>
            <person name="Detter J.C."/>
            <person name="Glavina del Rio T."/>
            <person name="Hammon N."/>
            <person name="Israni S."/>
            <person name="Pitluck S."/>
            <person name="Goltsman E."/>
            <person name="Schmutz J."/>
            <person name="Larimer F."/>
            <person name="Land M."/>
            <person name="Hauser L."/>
            <person name="Mikhailova N."/>
            <person name="Li T."/>
            <person name="Overmann J."/>
            <person name="Bryant D.A."/>
            <person name="Richardson P."/>
        </authorList>
    </citation>
    <scope>NUCLEOTIDE SEQUENCE [LARGE SCALE GENOMIC DNA]</scope>
    <source>
        <strain>DSM 266 / SMG 266 / 2430</strain>
    </source>
</reference>
<organism>
    <name type="scientific">Chlorobium phaeobacteroides (strain DSM 266 / SMG 266 / 2430)</name>
    <dbReference type="NCBI Taxonomy" id="290317"/>
    <lineage>
        <taxon>Bacteria</taxon>
        <taxon>Pseudomonadati</taxon>
        <taxon>Chlorobiota</taxon>
        <taxon>Chlorobiia</taxon>
        <taxon>Chlorobiales</taxon>
        <taxon>Chlorobiaceae</taxon>
        <taxon>Chlorobium/Pelodictyon group</taxon>
        <taxon>Chlorobium</taxon>
    </lineage>
</organism>
<protein>
    <recommendedName>
        <fullName evidence="1">Large ribosomal subunit protein uL4</fullName>
    </recommendedName>
    <alternativeName>
        <fullName evidence="3">50S ribosomal protein L4</fullName>
    </alternativeName>
</protein>
<keyword id="KW-1185">Reference proteome</keyword>
<keyword id="KW-0687">Ribonucleoprotein</keyword>
<keyword id="KW-0689">Ribosomal protein</keyword>
<keyword id="KW-0694">RNA-binding</keyword>
<keyword id="KW-0699">rRNA-binding</keyword>
<proteinExistence type="inferred from homology"/>
<feature type="chain" id="PRO_1000052379" description="Large ribosomal subunit protein uL4">
    <location>
        <begin position="1"/>
        <end position="208"/>
    </location>
</feature>
<feature type="region of interest" description="Disordered" evidence="2">
    <location>
        <begin position="45"/>
        <end position="85"/>
    </location>
</feature>
<feature type="compositionally biased region" description="Basic residues" evidence="2">
    <location>
        <begin position="46"/>
        <end position="66"/>
    </location>
</feature>
<feature type="compositionally biased region" description="Polar residues" evidence="2">
    <location>
        <begin position="69"/>
        <end position="80"/>
    </location>
</feature>
<gene>
    <name evidence="1" type="primary">rplD</name>
    <name type="ordered locus">Cpha266_2422</name>
</gene>
<evidence type="ECO:0000255" key="1">
    <source>
        <dbReference type="HAMAP-Rule" id="MF_01328"/>
    </source>
</evidence>
<evidence type="ECO:0000256" key="2">
    <source>
        <dbReference type="SAM" id="MobiDB-lite"/>
    </source>
</evidence>
<evidence type="ECO:0000305" key="3"/>
<accession>A1BJ33</accession>
<name>RL4_CHLPD</name>
<dbReference type="EMBL" id="CP000492">
    <property type="protein sequence ID" value="ABL66410.1"/>
    <property type="molecule type" value="Genomic_DNA"/>
</dbReference>
<dbReference type="RefSeq" id="WP_011746192.1">
    <property type="nucleotide sequence ID" value="NC_008639.1"/>
</dbReference>
<dbReference type="SMR" id="A1BJ33"/>
<dbReference type="STRING" id="290317.Cpha266_2422"/>
<dbReference type="KEGG" id="cph:Cpha266_2422"/>
<dbReference type="eggNOG" id="COG0088">
    <property type="taxonomic scope" value="Bacteria"/>
</dbReference>
<dbReference type="HOGENOM" id="CLU_041575_5_2_10"/>
<dbReference type="OrthoDB" id="9803201at2"/>
<dbReference type="Proteomes" id="UP000008701">
    <property type="component" value="Chromosome"/>
</dbReference>
<dbReference type="GO" id="GO:1990904">
    <property type="term" value="C:ribonucleoprotein complex"/>
    <property type="evidence" value="ECO:0007669"/>
    <property type="project" value="UniProtKB-KW"/>
</dbReference>
<dbReference type="GO" id="GO:0005840">
    <property type="term" value="C:ribosome"/>
    <property type="evidence" value="ECO:0007669"/>
    <property type="project" value="UniProtKB-KW"/>
</dbReference>
<dbReference type="GO" id="GO:0019843">
    <property type="term" value="F:rRNA binding"/>
    <property type="evidence" value="ECO:0007669"/>
    <property type="project" value="UniProtKB-UniRule"/>
</dbReference>
<dbReference type="GO" id="GO:0003735">
    <property type="term" value="F:structural constituent of ribosome"/>
    <property type="evidence" value="ECO:0007669"/>
    <property type="project" value="InterPro"/>
</dbReference>
<dbReference type="GO" id="GO:0006412">
    <property type="term" value="P:translation"/>
    <property type="evidence" value="ECO:0007669"/>
    <property type="project" value="UniProtKB-UniRule"/>
</dbReference>
<dbReference type="Gene3D" id="3.40.1370.10">
    <property type="match status" value="1"/>
</dbReference>
<dbReference type="HAMAP" id="MF_01328_B">
    <property type="entry name" value="Ribosomal_uL4_B"/>
    <property type="match status" value="1"/>
</dbReference>
<dbReference type="InterPro" id="IPR002136">
    <property type="entry name" value="Ribosomal_uL4"/>
</dbReference>
<dbReference type="InterPro" id="IPR013005">
    <property type="entry name" value="Ribosomal_uL4-like"/>
</dbReference>
<dbReference type="InterPro" id="IPR023574">
    <property type="entry name" value="Ribosomal_uL4_dom_sf"/>
</dbReference>
<dbReference type="NCBIfam" id="TIGR03953">
    <property type="entry name" value="rplD_bact"/>
    <property type="match status" value="1"/>
</dbReference>
<dbReference type="PANTHER" id="PTHR10746">
    <property type="entry name" value="50S RIBOSOMAL PROTEIN L4"/>
    <property type="match status" value="1"/>
</dbReference>
<dbReference type="PANTHER" id="PTHR10746:SF6">
    <property type="entry name" value="LARGE RIBOSOMAL SUBUNIT PROTEIN UL4M"/>
    <property type="match status" value="1"/>
</dbReference>
<dbReference type="Pfam" id="PF00573">
    <property type="entry name" value="Ribosomal_L4"/>
    <property type="match status" value="1"/>
</dbReference>
<dbReference type="SUPFAM" id="SSF52166">
    <property type="entry name" value="Ribosomal protein L4"/>
    <property type="match status" value="1"/>
</dbReference>
<sequence length="208" mass="22839">MELKVLNTSGTETGEVVTLNEEIFGVEVSEHAMYLDVKSILANKRQGTHKAKTRAQVRGGGRKPYRQKGTGNARQGSTRSPLMIGGGTIFGPQPRSYDQKVNKKVKLLARRSALSAKAKAGKILVIEDFRLDAIKTKPVAEILKNLGLEQKKILMLTPEYDMIIARSGRNIPVLNIMTADKVSTYDILNSSAILFQKTALTKIEDTLG</sequence>